<name>WECE_ECOLI</name>
<organism>
    <name type="scientific">Escherichia coli (strain K12)</name>
    <dbReference type="NCBI Taxonomy" id="83333"/>
    <lineage>
        <taxon>Bacteria</taxon>
        <taxon>Pseudomonadati</taxon>
        <taxon>Pseudomonadota</taxon>
        <taxon>Gammaproteobacteria</taxon>
        <taxon>Enterobacterales</taxon>
        <taxon>Enterobacteriaceae</taxon>
        <taxon>Escherichia</taxon>
    </lineage>
</organism>
<feature type="chain" id="PRO_0000110016" description="dTDP-4-amino-4,6-dideoxygalactose transaminase">
    <location>
        <begin position="1"/>
        <end position="376"/>
    </location>
</feature>
<feature type="modified residue" description="N6-(pyridoxal phosphate)lysine" evidence="1 2">
    <location>
        <position position="181"/>
    </location>
</feature>
<feature type="helix" evidence="9">
    <location>
        <begin position="13"/>
        <end position="23"/>
    </location>
</feature>
<feature type="strand" evidence="8">
    <location>
        <begin position="27"/>
        <end position="29"/>
    </location>
</feature>
<feature type="helix" evidence="9">
    <location>
        <begin position="31"/>
        <end position="44"/>
    </location>
</feature>
<feature type="strand" evidence="9">
    <location>
        <begin position="49"/>
        <end position="53"/>
    </location>
</feature>
<feature type="helix" evidence="9">
    <location>
        <begin position="55"/>
        <end position="65"/>
    </location>
</feature>
<feature type="strand" evidence="9">
    <location>
        <begin position="73"/>
        <end position="80"/>
    </location>
</feature>
<feature type="helix" evidence="9">
    <location>
        <begin position="82"/>
        <end position="89"/>
    </location>
</feature>
<feature type="turn" evidence="9">
    <location>
        <begin position="90"/>
        <end position="92"/>
    </location>
</feature>
<feature type="strand" evidence="9">
    <location>
        <begin position="94"/>
        <end position="98"/>
    </location>
</feature>
<feature type="turn" evidence="9">
    <location>
        <begin position="102"/>
        <end position="104"/>
    </location>
</feature>
<feature type="helix" evidence="9">
    <location>
        <begin position="113"/>
        <end position="115"/>
    </location>
</feature>
<feature type="strand" evidence="9">
    <location>
        <begin position="120"/>
        <end position="123"/>
    </location>
</feature>
<feature type="helix" evidence="9">
    <location>
        <begin position="128"/>
        <end position="130"/>
    </location>
</feature>
<feature type="helix" evidence="9">
    <location>
        <begin position="135"/>
        <end position="144"/>
    </location>
</feature>
<feature type="strand" evidence="9">
    <location>
        <begin position="148"/>
        <end position="152"/>
    </location>
</feature>
<feature type="strand" evidence="9">
    <location>
        <begin position="168"/>
        <end position="176"/>
    </location>
</feature>
<feature type="strand" evidence="9">
    <location>
        <begin position="181"/>
        <end position="183"/>
    </location>
</feature>
<feature type="helix" evidence="8">
    <location>
        <begin position="185"/>
        <end position="187"/>
    </location>
</feature>
<feature type="strand" evidence="9">
    <location>
        <begin position="190"/>
        <end position="194"/>
    </location>
</feature>
<feature type="helix" evidence="9">
    <location>
        <begin position="197"/>
        <end position="199"/>
    </location>
</feature>
<feature type="helix" evidence="9">
    <location>
        <begin position="200"/>
        <end position="207"/>
    </location>
</feature>
<feature type="strand" evidence="8">
    <location>
        <begin position="208"/>
        <end position="210"/>
    </location>
</feature>
<feature type="helix" evidence="9">
    <location>
        <begin position="237"/>
        <end position="248"/>
    </location>
</feature>
<feature type="helix" evidence="9">
    <location>
        <begin position="250"/>
        <end position="273"/>
    </location>
</feature>
<feature type="strand" evidence="8">
    <location>
        <begin position="276"/>
        <end position="278"/>
    </location>
</feature>
<feature type="strand" evidence="9">
    <location>
        <begin position="294"/>
        <end position="296"/>
    </location>
</feature>
<feature type="helix" evidence="9">
    <location>
        <begin position="300"/>
        <end position="312"/>
    </location>
</feature>
<feature type="turn" evidence="8">
    <location>
        <begin position="324"/>
        <end position="326"/>
    </location>
</feature>
<feature type="helix" evidence="9">
    <location>
        <begin position="328"/>
        <end position="333"/>
    </location>
</feature>
<feature type="strand" evidence="9">
    <location>
        <begin position="334"/>
        <end position="336"/>
    </location>
</feature>
<feature type="helix" evidence="9">
    <location>
        <begin position="343"/>
        <end position="349"/>
    </location>
</feature>
<feature type="strand" evidence="9">
    <location>
        <begin position="350"/>
        <end position="352"/>
    </location>
</feature>
<feature type="helix" evidence="9">
    <location>
        <begin position="361"/>
        <end position="374"/>
    </location>
</feature>
<dbReference type="EC" id="2.6.1.59" evidence="2 3"/>
<dbReference type="EMBL" id="M87049">
    <property type="protein sequence ID" value="AAA67591.1"/>
    <property type="status" value="ALT_FRAME"/>
    <property type="molecule type" value="Genomic_DNA"/>
</dbReference>
<dbReference type="EMBL" id="U00096">
    <property type="protein sequence ID" value="AAC76796.1"/>
    <property type="molecule type" value="Genomic_DNA"/>
</dbReference>
<dbReference type="EMBL" id="AP009048">
    <property type="protein sequence ID" value="BAE77507.1"/>
    <property type="molecule type" value="Genomic_DNA"/>
</dbReference>
<dbReference type="PIR" id="B65183">
    <property type="entry name" value="B65183"/>
</dbReference>
<dbReference type="RefSeq" id="NP_418238.1">
    <property type="nucleotide sequence ID" value="NC_000913.3"/>
</dbReference>
<dbReference type="RefSeq" id="WP_000612043.1">
    <property type="nucleotide sequence ID" value="NZ_SSZK01000025.1"/>
</dbReference>
<dbReference type="PDB" id="4PIW">
    <property type="method" value="X-ray"/>
    <property type="resolution" value="2.70 A"/>
    <property type="chains" value="A/B/C/D/E/F/G/H=1-376"/>
</dbReference>
<dbReference type="PDB" id="4ZAH">
    <property type="method" value="X-ray"/>
    <property type="resolution" value="2.24 A"/>
    <property type="chains" value="A/B/C/D/E/F/G/H=1-376"/>
</dbReference>
<dbReference type="PDBsum" id="4PIW"/>
<dbReference type="PDBsum" id="4ZAH"/>
<dbReference type="SMR" id="P27833"/>
<dbReference type="BioGRID" id="4263175">
    <property type="interactions" value="304"/>
</dbReference>
<dbReference type="FunCoup" id="P27833">
    <property type="interactions" value="64"/>
</dbReference>
<dbReference type="IntAct" id="P27833">
    <property type="interactions" value="4"/>
</dbReference>
<dbReference type="STRING" id="511145.b3791"/>
<dbReference type="jPOST" id="P27833"/>
<dbReference type="PaxDb" id="511145-b3791"/>
<dbReference type="DNASU" id="948296"/>
<dbReference type="EnsemblBacteria" id="AAC76796">
    <property type="protein sequence ID" value="AAC76796"/>
    <property type="gene ID" value="b3791"/>
</dbReference>
<dbReference type="GeneID" id="948296"/>
<dbReference type="KEGG" id="ecj:JW3765"/>
<dbReference type="KEGG" id="eco:b3791"/>
<dbReference type="KEGG" id="ecoc:C3026_20525"/>
<dbReference type="PATRIC" id="fig|1411691.4.peg.2915"/>
<dbReference type="EchoBASE" id="EB1425"/>
<dbReference type="eggNOG" id="COG0399">
    <property type="taxonomic scope" value="Bacteria"/>
</dbReference>
<dbReference type="HOGENOM" id="CLU_033332_0_2_6"/>
<dbReference type="InParanoid" id="P27833"/>
<dbReference type="OMA" id="VWNQYTI"/>
<dbReference type="OrthoDB" id="9804264at2"/>
<dbReference type="PhylomeDB" id="P27833"/>
<dbReference type="BioCyc" id="EcoCyc:RFFTRANS-MONOMER"/>
<dbReference type="BioCyc" id="MetaCyc:RFFTRANS-MONOMER"/>
<dbReference type="BRENDA" id="2.6.1.33">
    <property type="organism ID" value="2026"/>
</dbReference>
<dbReference type="BRENDA" id="2.6.1.59">
    <property type="organism ID" value="2026"/>
</dbReference>
<dbReference type="UniPathway" id="UPA00566"/>
<dbReference type="EvolutionaryTrace" id="P27833"/>
<dbReference type="PRO" id="PR:P27833"/>
<dbReference type="Proteomes" id="UP000000625">
    <property type="component" value="Chromosome"/>
</dbReference>
<dbReference type="GO" id="GO:0019180">
    <property type="term" value="F:dTDP-4-amino-4,6-dideoxygalactose transaminase activity"/>
    <property type="evidence" value="ECO:0000314"/>
    <property type="project" value="EcoCyc"/>
</dbReference>
<dbReference type="GO" id="GO:0042802">
    <property type="term" value="F:identical protein binding"/>
    <property type="evidence" value="ECO:0000314"/>
    <property type="project" value="EcoCyc"/>
</dbReference>
<dbReference type="GO" id="GO:0030170">
    <property type="term" value="F:pyridoxal phosphate binding"/>
    <property type="evidence" value="ECO:0000314"/>
    <property type="project" value="EcoCyc"/>
</dbReference>
<dbReference type="GO" id="GO:0009246">
    <property type="term" value="P:enterobacterial common antigen biosynthetic process"/>
    <property type="evidence" value="ECO:0000315"/>
    <property type="project" value="EcoCyc"/>
</dbReference>
<dbReference type="GO" id="GO:0000271">
    <property type="term" value="P:polysaccharide biosynthetic process"/>
    <property type="evidence" value="ECO:0000318"/>
    <property type="project" value="GO_Central"/>
</dbReference>
<dbReference type="CDD" id="cd00616">
    <property type="entry name" value="AHBA_syn"/>
    <property type="match status" value="1"/>
</dbReference>
<dbReference type="FunFam" id="3.40.640.10:FF:000037">
    <property type="entry name" value="dTDP-4-amino-4,6-dideoxygalactose transaminase"/>
    <property type="match status" value="1"/>
</dbReference>
<dbReference type="FunFam" id="3.90.1150.10:FF:000061">
    <property type="entry name" value="dTDP-4-amino-4,6-dideoxygalactose transaminase"/>
    <property type="match status" value="1"/>
</dbReference>
<dbReference type="Gene3D" id="3.90.1150.10">
    <property type="entry name" value="Aspartate Aminotransferase, domain 1"/>
    <property type="match status" value="1"/>
</dbReference>
<dbReference type="Gene3D" id="3.40.640.10">
    <property type="entry name" value="Type I PLP-dependent aspartate aminotransferase-like (Major domain)"/>
    <property type="match status" value="1"/>
</dbReference>
<dbReference type="HAMAP" id="MF_02026">
    <property type="entry name" value="WecE_RffA"/>
    <property type="match status" value="1"/>
</dbReference>
<dbReference type="InterPro" id="IPR000653">
    <property type="entry name" value="DegT/StrS_aminotransferase"/>
</dbReference>
<dbReference type="InterPro" id="IPR015424">
    <property type="entry name" value="PyrdxlP-dep_Trfase"/>
</dbReference>
<dbReference type="InterPro" id="IPR015421">
    <property type="entry name" value="PyrdxlP-dep_Trfase_major"/>
</dbReference>
<dbReference type="InterPro" id="IPR015422">
    <property type="entry name" value="PyrdxlP-dep_Trfase_small"/>
</dbReference>
<dbReference type="InterPro" id="IPR032894">
    <property type="entry name" value="WecE"/>
</dbReference>
<dbReference type="InterPro" id="IPR012749">
    <property type="entry name" value="WecE-like"/>
</dbReference>
<dbReference type="NCBIfam" id="TIGR02379">
    <property type="entry name" value="ECA_wecE"/>
    <property type="match status" value="1"/>
</dbReference>
<dbReference type="NCBIfam" id="NF008687">
    <property type="entry name" value="PRK11706.1"/>
    <property type="match status" value="1"/>
</dbReference>
<dbReference type="PANTHER" id="PTHR30244:SF34">
    <property type="entry name" value="DTDP-4-AMINO-4,6-DIDEOXYGALACTOSE TRANSAMINASE"/>
    <property type="match status" value="1"/>
</dbReference>
<dbReference type="PANTHER" id="PTHR30244">
    <property type="entry name" value="TRANSAMINASE"/>
    <property type="match status" value="1"/>
</dbReference>
<dbReference type="Pfam" id="PF01041">
    <property type="entry name" value="DegT_DnrJ_EryC1"/>
    <property type="match status" value="1"/>
</dbReference>
<dbReference type="PIRSF" id="PIRSF000390">
    <property type="entry name" value="PLP_StrS"/>
    <property type="match status" value="1"/>
</dbReference>
<dbReference type="SUPFAM" id="SSF53383">
    <property type="entry name" value="PLP-dependent transferases"/>
    <property type="match status" value="1"/>
</dbReference>
<keyword id="KW-0002">3D-structure</keyword>
<keyword id="KW-0663">Pyridoxal phosphate</keyword>
<keyword id="KW-1185">Reference proteome</keyword>
<keyword id="KW-0808">Transferase</keyword>
<accession>P27833</accession>
<accession>Q2M899</accession>
<comment type="function">
    <text evidence="2 3">Catalyzes the synthesis of dTDP-4-amino-4,6-dideoxy-D-galactose (dTDP-Fuc4N) from dTDP-4-keto-6-deoxy-D-glucose (dTDP-D-Glc4O) and L-glutamate.</text>
</comment>
<comment type="catalytic activity">
    <reaction evidence="2 3">
        <text>dTDP-4-amino-4,6-dideoxy-alpha-D-galactose + 2-oxoglutarate = dTDP-4-dehydro-6-deoxy-alpha-D-glucose + L-glutamate</text>
        <dbReference type="Rhea" id="RHEA:10368"/>
        <dbReference type="ChEBI" id="CHEBI:16810"/>
        <dbReference type="ChEBI" id="CHEBI:29985"/>
        <dbReference type="ChEBI" id="CHEBI:57649"/>
        <dbReference type="ChEBI" id="CHEBI:68492"/>
        <dbReference type="EC" id="2.6.1.59"/>
    </reaction>
</comment>
<comment type="cofactor">
    <cofactor evidence="2 3">
        <name>pyridoxal 5'-phosphate</name>
        <dbReference type="ChEBI" id="CHEBI:597326"/>
    </cofactor>
</comment>
<comment type="biophysicochemical properties">
    <kinetics>
        <KM evidence="3">0.11 mM for TDP-4-keto-6-deoxy-D-glucose</KM>
        <text evidence="3">kcat is 0.38 sec(-1).</text>
    </kinetics>
    <phDependence>
        <text evidence="3">Optimum pH is 7.5.</text>
    </phDependence>
    <temperatureDependence>
        <text evidence="3">Optimum temperature is 37 degrees Celsius.</text>
    </temperatureDependence>
</comment>
<comment type="pathway">
    <text evidence="2 4">Bacterial outer membrane biogenesis; enterobacterial common antigen biosynthesis.</text>
</comment>
<comment type="subunit">
    <text evidence="3">Homotetramer.</text>
</comment>
<comment type="disruption phenotype">
    <text evidence="4">Mutants do not synthesize TDP-Fuc4NAc and enterobacterial common antigen (ECA).</text>
</comment>
<comment type="similarity">
    <text evidence="2 7">Belongs to the DegT/DnrJ/EryC1 family.</text>
</comment>
<sequence>MIPFNAPPVVGTELDYMQSAMGSGKLCGDGGFTRRCQQWLEQRFGSAKVLLTPSCTASLEMAALLLDIQPGDEVIMPSYTFVSTANAFVLRGAKIVFVDVRPDTMNIDETLIEAAITDKTRVIVPVHYAGVACEMDTIMALAKKHNLFVVEDAAQGVMSTYKGRALGTIGHIGCFSFHETKNYTAGGEGGATLINDKALIERAEIIREKGTNRSQFFRGQVDKYTWRDIGSSYLMSDLQAAYLWAQLEAADRINQQRLALWQNYYDALAPLAKAGRIELPSIPDGCVQNAHMFYIKLRDIDDRSALINFLKEAEIMAVFHYIPLHGCPAGEHFGEFHGEDRYTTKESERLLRLPLFYNLSPVNQRTVIATLLNYFS</sequence>
<reference key="1">
    <citation type="journal article" date="1992" name="Science">
        <title>Analysis of the Escherichia coli genome: DNA sequence of the region from 84.5 to 86.5 minutes.</title>
        <authorList>
            <person name="Daniels D.L."/>
            <person name="Plunkett G. III"/>
            <person name="Burland V.D."/>
            <person name="Blattner F.R."/>
        </authorList>
    </citation>
    <scope>NUCLEOTIDE SEQUENCE [LARGE SCALE GENOMIC DNA]</scope>
    <source>
        <strain>K12 / MG1655 / ATCC 47076</strain>
    </source>
</reference>
<reference key="2">
    <citation type="journal article" date="1997" name="Science">
        <title>The complete genome sequence of Escherichia coli K-12.</title>
        <authorList>
            <person name="Blattner F.R."/>
            <person name="Plunkett G. III"/>
            <person name="Bloch C.A."/>
            <person name="Perna N.T."/>
            <person name="Burland V."/>
            <person name="Riley M."/>
            <person name="Collado-Vides J."/>
            <person name="Glasner J.D."/>
            <person name="Rode C.K."/>
            <person name="Mayhew G.F."/>
            <person name="Gregor J."/>
            <person name="Davis N.W."/>
            <person name="Kirkpatrick H.A."/>
            <person name="Goeden M.A."/>
            <person name="Rose D.J."/>
            <person name="Mau B."/>
            <person name="Shao Y."/>
        </authorList>
    </citation>
    <scope>NUCLEOTIDE SEQUENCE [LARGE SCALE GENOMIC DNA]</scope>
    <scope>SEQUENCE REVISION TO C-TERMINUS</scope>
    <source>
        <strain>K12 / MG1655 / ATCC 47076</strain>
    </source>
</reference>
<reference key="3">
    <citation type="journal article" date="2006" name="Mol. Syst. Biol.">
        <title>Highly accurate genome sequences of Escherichia coli K-12 strains MG1655 and W3110.</title>
        <authorList>
            <person name="Hayashi K."/>
            <person name="Morooka N."/>
            <person name="Yamamoto Y."/>
            <person name="Fujita K."/>
            <person name="Isono K."/>
            <person name="Choi S."/>
            <person name="Ohtsubo E."/>
            <person name="Baba T."/>
            <person name="Wanner B.L."/>
            <person name="Mori H."/>
            <person name="Horiuchi T."/>
        </authorList>
    </citation>
    <scope>NUCLEOTIDE SEQUENCE [LARGE SCALE GENOMIC DNA]</scope>
    <source>
        <strain>K12 / W3110 / ATCC 27325 / DSM 5911</strain>
    </source>
</reference>
<reference key="4">
    <citation type="journal article" date="1990" name="J. Biol. Chem.">
        <title>Biosynthesis of enterobacterial common antigen in Escherichia coli. Biochemical characterization of Tn10 insertion mutants defective in enterobacterial common antigen synthesis.</title>
        <authorList>
            <person name="Meier-Dieter U."/>
            <person name="Starman R."/>
            <person name="Barr K."/>
            <person name="Mayer H."/>
            <person name="Rick P.D."/>
        </authorList>
    </citation>
    <scope>PATHWAY</scope>
    <scope>DISRUPTION PHENOTYPE</scope>
</reference>
<reference key="5">
    <citation type="journal article" date="1993" name="J. Bacteriol.">
        <title>Physical map location of the rffC and rffA genes of Escherichia coli.</title>
        <authorList>
            <person name="Barr K."/>
            <person name="Rick P.D."/>
        </authorList>
    </citation>
    <scope>IDENTIFICATION</scope>
</reference>
<reference key="6">
    <citation type="journal article" date="2004" name="Chem. Biol.">
        <title>Characterization and investigation of substrate specificity of the sugar aminotransferase WecE from E. coli K12.</title>
        <authorList>
            <person name="Hwang B.Y."/>
            <person name="Lee H.J."/>
            <person name="Yang Y.H."/>
            <person name="Joo H.S."/>
            <person name="Kim B.G."/>
        </authorList>
    </citation>
    <scope>FUNCTION</scope>
    <scope>CATALYTIC ACTIVITY</scope>
    <scope>COFACTOR</scope>
    <scope>BIOPHYSICOCHEMICAL PROPERTIES</scope>
    <scope>SUBUNIT</scope>
    <source>
        <strain>K12</strain>
    </source>
</reference>
<reference key="7">
    <citation type="submission" date="2014-09" db="PDB data bank">
        <title>Crystal structure of sugar aminotransferase WecE with external aldimine VII from Escherichia coli K-12.</title>
        <authorList>
            <person name="Wang F."/>
            <person name="Singh S."/>
            <person name="Cao H."/>
            <person name="Xu W."/>
            <person name="Miller M.D."/>
            <person name="Thorson J.S."/>
            <person name="Phillips G.N. Jr."/>
        </authorList>
    </citation>
    <scope>X-RAY CRYSTALLOGRAPHY (2.24 ANGSTROMS)</scope>
</reference>
<gene>
    <name evidence="2 5" type="primary">wecE</name>
    <name evidence="6" type="synonym">rffA</name>
    <name type="synonym">yifI</name>
    <name type="ordered locus">b3791</name>
    <name type="ordered locus">JW3765</name>
</gene>
<proteinExistence type="evidence at protein level"/>
<protein>
    <recommendedName>
        <fullName evidence="2 7">dTDP-4-amino-4,6-dideoxygalactose transaminase</fullName>
        <ecNumber evidence="2 3">2.6.1.59</ecNumber>
    </recommendedName>
</protein>
<evidence type="ECO:0000250" key="1">
    <source>
        <dbReference type="UniProtKB" id="Q8ZNF3"/>
    </source>
</evidence>
<evidence type="ECO:0000255" key="2">
    <source>
        <dbReference type="HAMAP-Rule" id="MF_02026"/>
    </source>
</evidence>
<evidence type="ECO:0000269" key="3">
    <source>
    </source>
</evidence>
<evidence type="ECO:0000269" key="4">
    <source>
    </source>
</evidence>
<evidence type="ECO:0000303" key="5">
    <source>
    </source>
</evidence>
<evidence type="ECO:0000303" key="6">
    <source>
    </source>
</evidence>
<evidence type="ECO:0000305" key="7"/>
<evidence type="ECO:0007829" key="8">
    <source>
        <dbReference type="PDB" id="4PIW"/>
    </source>
</evidence>
<evidence type="ECO:0007829" key="9">
    <source>
        <dbReference type="PDB" id="4ZAH"/>
    </source>
</evidence>